<gene>
    <name evidence="1" type="primary">hemH</name>
    <name type="ordered locus">BBta_1357</name>
</gene>
<protein>
    <recommendedName>
        <fullName evidence="1">Ferrochelatase</fullName>
        <ecNumber evidence="1">4.98.1.1</ecNumber>
    </recommendedName>
    <alternativeName>
        <fullName evidence="1">Heme synthase</fullName>
    </alternativeName>
    <alternativeName>
        <fullName evidence="1">Protoheme ferro-lyase</fullName>
    </alternativeName>
</protein>
<feature type="chain" id="PRO_1000019273" description="Ferrochelatase">
    <location>
        <begin position="1"/>
        <end position="351"/>
    </location>
</feature>
<feature type="binding site" evidence="1">
    <location>
        <position position="221"/>
    </location>
    <ligand>
        <name>Fe cation</name>
        <dbReference type="ChEBI" id="CHEBI:24875"/>
    </ligand>
</feature>
<feature type="binding site" evidence="1">
    <location>
        <position position="302"/>
    </location>
    <ligand>
        <name>Fe cation</name>
        <dbReference type="ChEBI" id="CHEBI:24875"/>
    </ligand>
</feature>
<accession>A5EBP8</accession>
<name>HEMH_BRASB</name>
<comment type="function">
    <text evidence="1">Catalyzes the ferrous insertion into protoporphyrin IX.</text>
</comment>
<comment type="catalytic activity">
    <reaction evidence="1">
        <text>heme b + 2 H(+) = protoporphyrin IX + Fe(2+)</text>
        <dbReference type="Rhea" id="RHEA:22584"/>
        <dbReference type="ChEBI" id="CHEBI:15378"/>
        <dbReference type="ChEBI" id="CHEBI:29033"/>
        <dbReference type="ChEBI" id="CHEBI:57306"/>
        <dbReference type="ChEBI" id="CHEBI:60344"/>
        <dbReference type="EC" id="4.98.1.1"/>
    </reaction>
</comment>
<comment type="pathway">
    <text evidence="1">Porphyrin-containing compound metabolism; protoheme biosynthesis; protoheme from protoporphyrin-IX: step 1/1.</text>
</comment>
<comment type="subcellular location">
    <subcellularLocation>
        <location evidence="1">Cytoplasm</location>
    </subcellularLocation>
</comment>
<comment type="similarity">
    <text evidence="1">Belongs to the ferrochelatase family.</text>
</comment>
<organism>
    <name type="scientific">Bradyrhizobium sp. (strain BTAi1 / ATCC BAA-1182)</name>
    <dbReference type="NCBI Taxonomy" id="288000"/>
    <lineage>
        <taxon>Bacteria</taxon>
        <taxon>Pseudomonadati</taxon>
        <taxon>Pseudomonadota</taxon>
        <taxon>Alphaproteobacteria</taxon>
        <taxon>Hyphomicrobiales</taxon>
        <taxon>Nitrobacteraceae</taxon>
        <taxon>Bradyrhizobium</taxon>
    </lineage>
</organism>
<keyword id="KW-0963">Cytoplasm</keyword>
<keyword id="KW-0350">Heme biosynthesis</keyword>
<keyword id="KW-0408">Iron</keyword>
<keyword id="KW-0456">Lyase</keyword>
<keyword id="KW-0479">Metal-binding</keyword>
<keyword id="KW-0627">Porphyrin biosynthesis</keyword>
<keyword id="KW-1185">Reference proteome</keyword>
<reference key="1">
    <citation type="journal article" date="2007" name="Science">
        <title>Legumes symbioses: absence of nod genes in photosynthetic bradyrhizobia.</title>
        <authorList>
            <person name="Giraud E."/>
            <person name="Moulin L."/>
            <person name="Vallenet D."/>
            <person name="Barbe V."/>
            <person name="Cytryn E."/>
            <person name="Avarre J.-C."/>
            <person name="Jaubert M."/>
            <person name="Simon D."/>
            <person name="Cartieaux F."/>
            <person name="Prin Y."/>
            <person name="Bena G."/>
            <person name="Hannibal L."/>
            <person name="Fardoux J."/>
            <person name="Kojadinovic M."/>
            <person name="Vuillet L."/>
            <person name="Lajus A."/>
            <person name="Cruveiller S."/>
            <person name="Rouy Z."/>
            <person name="Mangenot S."/>
            <person name="Segurens B."/>
            <person name="Dossat C."/>
            <person name="Franck W.L."/>
            <person name="Chang W.-S."/>
            <person name="Saunders E."/>
            <person name="Bruce D."/>
            <person name="Richardson P."/>
            <person name="Normand P."/>
            <person name="Dreyfus B."/>
            <person name="Pignol D."/>
            <person name="Stacey G."/>
            <person name="Emerich D."/>
            <person name="Vermeglio A."/>
            <person name="Medigue C."/>
            <person name="Sadowsky M."/>
        </authorList>
    </citation>
    <scope>NUCLEOTIDE SEQUENCE [LARGE SCALE GENOMIC DNA]</scope>
    <source>
        <strain>BTAi1 / ATCC BAA-1182</strain>
    </source>
</reference>
<dbReference type="EC" id="4.98.1.1" evidence="1"/>
<dbReference type="EMBL" id="CP000494">
    <property type="protein sequence ID" value="ABQ33592.1"/>
    <property type="molecule type" value="Genomic_DNA"/>
</dbReference>
<dbReference type="RefSeq" id="WP_012041634.1">
    <property type="nucleotide sequence ID" value="NC_009485.1"/>
</dbReference>
<dbReference type="SMR" id="A5EBP8"/>
<dbReference type="STRING" id="288000.BBta_1357"/>
<dbReference type="KEGG" id="bbt:BBta_1357"/>
<dbReference type="eggNOG" id="COG0276">
    <property type="taxonomic scope" value="Bacteria"/>
</dbReference>
<dbReference type="HOGENOM" id="CLU_018884_0_0_5"/>
<dbReference type="OrthoDB" id="9809741at2"/>
<dbReference type="UniPathway" id="UPA00252">
    <property type="reaction ID" value="UER00325"/>
</dbReference>
<dbReference type="Proteomes" id="UP000000246">
    <property type="component" value="Chromosome"/>
</dbReference>
<dbReference type="GO" id="GO:0005737">
    <property type="term" value="C:cytoplasm"/>
    <property type="evidence" value="ECO:0007669"/>
    <property type="project" value="UniProtKB-SubCell"/>
</dbReference>
<dbReference type="GO" id="GO:0004325">
    <property type="term" value="F:ferrochelatase activity"/>
    <property type="evidence" value="ECO:0007669"/>
    <property type="project" value="UniProtKB-UniRule"/>
</dbReference>
<dbReference type="GO" id="GO:0046872">
    <property type="term" value="F:metal ion binding"/>
    <property type="evidence" value="ECO:0007669"/>
    <property type="project" value="UniProtKB-KW"/>
</dbReference>
<dbReference type="GO" id="GO:0006783">
    <property type="term" value="P:heme biosynthetic process"/>
    <property type="evidence" value="ECO:0007669"/>
    <property type="project" value="UniProtKB-UniRule"/>
</dbReference>
<dbReference type="CDD" id="cd00419">
    <property type="entry name" value="Ferrochelatase_C"/>
    <property type="match status" value="1"/>
</dbReference>
<dbReference type="CDD" id="cd03411">
    <property type="entry name" value="Ferrochelatase_N"/>
    <property type="match status" value="1"/>
</dbReference>
<dbReference type="FunFam" id="3.40.50.1400:FF:000002">
    <property type="entry name" value="Ferrochelatase"/>
    <property type="match status" value="1"/>
</dbReference>
<dbReference type="Gene3D" id="3.40.50.1400">
    <property type="match status" value="2"/>
</dbReference>
<dbReference type="HAMAP" id="MF_00323">
    <property type="entry name" value="Ferrochelatase"/>
    <property type="match status" value="1"/>
</dbReference>
<dbReference type="InterPro" id="IPR001015">
    <property type="entry name" value="Ferrochelatase"/>
</dbReference>
<dbReference type="InterPro" id="IPR019772">
    <property type="entry name" value="Ferrochelatase_AS"/>
</dbReference>
<dbReference type="InterPro" id="IPR033644">
    <property type="entry name" value="Ferrochelatase_C"/>
</dbReference>
<dbReference type="InterPro" id="IPR033659">
    <property type="entry name" value="Ferrochelatase_N"/>
</dbReference>
<dbReference type="NCBIfam" id="TIGR00109">
    <property type="entry name" value="hemH"/>
    <property type="match status" value="1"/>
</dbReference>
<dbReference type="PANTHER" id="PTHR11108">
    <property type="entry name" value="FERROCHELATASE"/>
    <property type="match status" value="1"/>
</dbReference>
<dbReference type="PANTHER" id="PTHR11108:SF1">
    <property type="entry name" value="FERROCHELATASE, MITOCHONDRIAL"/>
    <property type="match status" value="1"/>
</dbReference>
<dbReference type="Pfam" id="PF00762">
    <property type="entry name" value="Ferrochelatase"/>
    <property type="match status" value="1"/>
</dbReference>
<dbReference type="SUPFAM" id="SSF53800">
    <property type="entry name" value="Chelatase"/>
    <property type="match status" value="1"/>
</dbReference>
<dbReference type="PROSITE" id="PS00534">
    <property type="entry name" value="FERROCHELATASE"/>
    <property type="match status" value="1"/>
</dbReference>
<sequence>MTAAISFDNARSPDNALPLPAASTARVGVLLVNLGTPDTADAAGVRVYLKEFLSDRRVIEDQGLLWKIILNGIILNVRPRKKAKDYQSIWNTEKNESPLKTITRAQSEKLSAALADRSHVIVDWAMRYGNPSIKAGVDGLMAKGCDRILVVPLYPQYSAATSATVCDEAFRVLTELRAQPTLRVTPPYYNDDFYIEALAVSIEEHLKTLSYKPELIVASFHGMPKEYVDKGDPYREQCVATTELLRKRLGMDDTKLLLTFQSRFGFSEWLQPYTDKTIEKLAKDGVKRIAVVMPGFAADCLETLEEISGENCEIFKHNGGEEFSAVPCLNDSAPGMEVLRQLVLRELQGWL</sequence>
<evidence type="ECO:0000255" key="1">
    <source>
        <dbReference type="HAMAP-Rule" id="MF_00323"/>
    </source>
</evidence>
<proteinExistence type="inferred from homology"/>